<reference key="1">
    <citation type="journal article" date="2007" name="Nat. Biotechnol.">
        <title>Genome sequence and identification of candidate vaccine antigens from the animal pathogen Dichelobacter nodosus.</title>
        <authorList>
            <person name="Myers G.S.A."/>
            <person name="Parker D."/>
            <person name="Al-Hasani K."/>
            <person name="Kennan R.M."/>
            <person name="Seemann T."/>
            <person name="Ren Q."/>
            <person name="Badger J.H."/>
            <person name="Selengut J.D."/>
            <person name="Deboy R.T."/>
            <person name="Tettelin H."/>
            <person name="Boyce J.D."/>
            <person name="McCarl V.P."/>
            <person name="Han X."/>
            <person name="Nelson W.C."/>
            <person name="Madupu R."/>
            <person name="Mohamoud Y."/>
            <person name="Holley T."/>
            <person name="Fedorova N."/>
            <person name="Khouri H."/>
            <person name="Bottomley S.P."/>
            <person name="Whittington R.J."/>
            <person name="Adler B."/>
            <person name="Songer J.G."/>
            <person name="Rood J.I."/>
            <person name="Paulsen I.T."/>
        </authorList>
    </citation>
    <scope>NUCLEOTIDE SEQUENCE [LARGE SCALE GENOMIC DNA]</scope>
    <source>
        <strain>VCS1703A</strain>
    </source>
</reference>
<proteinExistence type="inferred from homology"/>
<protein>
    <recommendedName>
        <fullName evidence="1">Fructose-1,6-bisphosphatase class 1</fullName>
        <shortName evidence="1">FBPase class 1</shortName>
        <ecNumber evidence="1">3.1.3.11</ecNumber>
    </recommendedName>
    <alternativeName>
        <fullName evidence="1">D-fructose-1,6-bisphosphate 1-phosphohydrolase class 1</fullName>
    </alternativeName>
</protein>
<comment type="catalytic activity">
    <reaction evidence="1">
        <text>beta-D-fructose 1,6-bisphosphate + H2O = beta-D-fructose 6-phosphate + phosphate</text>
        <dbReference type="Rhea" id="RHEA:11064"/>
        <dbReference type="ChEBI" id="CHEBI:15377"/>
        <dbReference type="ChEBI" id="CHEBI:32966"/>
        <dbReference type="ChEBI" id="CHEBI:43474"/>
        <dbReference type="ChEBI" id="CHEBI:57634"/>
        <dbReference type="EC" id="3.1.3.11"/>
    </reaction>
</comment>
<comment type="cofactor">
    <cofactor evidence="1">
        <name>Mg(2+)</name>
        <dbReference type="ChEBI" id="CHEBI:18420"/>
    </cofactor>
    <text evidence="1">Binds 2 magnesium ions per subunit.</text>
</comment>
<comment type="pathway">
    <text evidence="1">Carbohydrate biosynthesis; gluconeogenesis.</text>
</comment>
<comment type="subunit">
    <text evidence="1">Homotetramer.</text>
</comment>
<comment type="subcellular location">
    <subcellularLocation>
        <location evidence="1">Cytoplasm</location>
    </subcellularLocation>
</comment>
<comment type="similarity">
    <text evidence="1">Belongs to the FBPase class 1 family.</text>
</comment>
<name>F16PA_DICNV</name>
<sequence length="336" mass="37269">MKSLGEFIIEKQAEYPQAKGSLSGILSAVRRAAKIINRDINRAGVVSDLVLGSMGRENVQGETQMKLDVFAHEAMKAAFYSRDDIAGFASEEEEEFTAFDTERGHNAKYIILMDPLDGSSNIDVNVSVGSIFSIYHRVTPIGTPVTLEDFLQPGHKQIAAGYIIYGSSTMLVFTTGNGVNGFTYDPSLGTFLLSHENIKIPKDGAIYSINEGGYLKFPQGIKKYIKYCQEDAPEEHRPYKSRYIGSLVADFHRNMLKGGVYMYPQASNYPNGKLRLSYECNPMAFIAEQAGGVATTGHERILDIQPQALHQRTPFIVGSEHMVNKIKDFIAQYPDN</sequence>
<accession>A5EVS5</accession>
<gene>
    <name evidence="1" type="primary">fbp</name>
    <name type="ordered locus">DNO_0468</name>
</gene>
<dbReference type="EC" id="3.1.3.11" evidence="1"/>
<dbReference type="EMBL" id="CP000513">
    <property type="protein sequence ID" value="ABQ13475.1"/>
    <property type="molecule type" value="Genomic_DNA"/>
</dbReference>
<dbReference type="RefSeq" id="WP_012030804.1">
    <property type="nucleotide sequence ID" value="NC_009446.1"/>
</dbReference>
<dbReference type="SMR" id="A5EVS5"/>
<dbReference type="STRING" id="246195.DNO_0468"/>
<dbReference type="KEGG" id="dno:DNO_0468"/>
<dbReference type="eggNOG" id="COG0158">
    <property type="taxonomic scope" value="Bacteria"/>
</dbReference>
<dbReference type="HOGENOM" id="CLU_039977_2_2_6"/>
<dbReference type="OrthoDB" id="9806756at2"/>
<dbReference type="UniPathway" id="UPA00138"/>
<dbReference type="Proteomes" id="UP000000248">
    <property type="component" value="Chromosome"/>
</dbReference>
<dbReference type="GO" id="GO:0005829">
    <property type="term" value="C:cytosol"/>
    <property type="evidence" value="ECO:0007669"/>
    <property type="project" value="TreeGrafter"/>
</dbReference>
<dbReference type="GO" id="GO:0042132">
    <property type="term" value="F:fructose 1,6-bisphosphate 1-phosphatase activity"/>
    <property type="evidence" value="ECO:0007669"/>
    <property type="project" value="UniProtKB-UniRule"/>
</dbReference>
<dbReference type="GO" id="GO:0000287">
    <property type="term" value="F:magnesium ion binding"/>
    <property type="evidence" value="ECO:0007669"/>
    <property type="project" value="UniProtKB-UniRule"/>
</dbReference>
<dbReference type="GO" id="GO:0030388">
    <property type="term" value="P:fructose 1,6-bisphosphate metabolic process"/>
    <property type="evidence" value="ECO:0007669"/>
    <property type="project" value="TreeGrafter"/>
</dbReference>
<dbReference type="GO" id="GO:0006002">
    <property type="term" value="P:fructose 6-phosphate metabolic process"/>
    <property type="evidence" value="ECO:0007669"/>
    <property type="project" value="TreeGrafter"/>
</dbReference>
<dbReference type="GO" id="GO:0006000">
    <property type="term" value="P:fructose metabolic process"/>
    <property type="evidence" value="ECO:0007669"/>
    <property type="project" value="TreeGrafter"/>
</dbReference>
<dbReference type="GO" id="GO:0006094">
    <property type="term" value="P:gluconeogenesis"/>
    <property type="evidence" value="ECO:0007669"/>
    <property type="project" value="UniProtKB-UniRule"/>
</dbReference>
<dbReference type="GO" id="GO:0005986">
    <property type="term" value="P:sucrose biosynthetic process"/>
    <property type="evidence" value="ECO:0007669"/>
    <property type="project" value="TreeGrafter"/>
</dbReference>
<dbReference type="CDD" id="cd00354">
    <property type="entry name" value="FBPase"/>
    <property type="match status" value="1"/>
</dbReference>
<dbReference type="FunFam" id="3.30.540.10:FF:000002">
    <property type="entry name" value="Fructose-1,6-bisphosphatase class 1"/>
    <property type="match status" value="1"/>
</dbReference>
<dbReference type="FunFam" id="3.40.190.80:FF:000001">
    <property type="entry name" value="Fructose-1,6-bisphosphatase class 1"/>
    <property type="match status" value="1"/>
</dbReference>
<dbReference type="Gene3D" id="3.40.190.80">
    <property type="match status" value="1"/>
</dbReference>
<dbReference type="Gene3D" id="3.30.540.10">
    <property type="entry name" value="Fructose-1,6-Bisphosphatase, subunit A, domain 1"/>
    <property type="match status" value="1"/>
</dbReference>
<dbReference type="HAMAP" id="MF_01855">
    <property type="entry name" value="FBPase_class1"/>
    <property type="match status" value="1"/>
</dbReference>
<dbReference type="InterPro" id="IPR044015">
    <property type="entry name" value="FBPase_C_dom"/>
</dbReference>
<dbReference type="InterPro" id="IPR000146">
    <property type="entry name" value="FBPase_class-1"/>
</dbReference>
<dbReference type="InterPro" id="IPR033391">
    <property type="entry name" value="FBPase_N"/>
</dbReference>
<dbReference type="InterPro" id="IPR028343">
    <property type="entry name" value="FBPtase"/>
</dbReference>
<dbReference type="NCBIfam" id="NF006778">
    <property type="entry name" value="PRK09293.1-1"/>
    <property type="match status" value="1"/>
</dbReference>
<dbReference type="PANTHER" id="PTHR11556">
    <property type="entry name" value="FRUCTOSE-1,6-BISPHOSPHATASE-RELATED"/>
    <property type="match status" value="1"/>
</dbReference>
<dbReference type="PANTHER" id="PTHR11556:SF35">
    <property type="entry name" value="SEDOHEPTULOSE-1,7-BISPHOSPHATASE, CHLOROPLASTIC"/>
    <property type="match status" value="1"/>
</dbReference>
<dbReference type="Pfam" id="PF00316">
    <property type="entry name" value="FBPase"/>
    <property type="match status" value="1"/>
</dbReference>
<dbReference type="Pfam" id="PF18913">
    <property type="entry name" value="FBPase_C"/>
    <property type="match status" value="1"/>
</dbReference>
<dbReference type="PIRSF" id="PIRSF500210">
    <property type="entry name" value="FBPtase"/>
    <property type="match status" value="1"/>
</dbReference>
<dbReference type="PIRSF" id="PIRSF000904">
    <property type="entry name" value="FBPtase_SBPase"/>
    <property type="match status" value="1"/>
</dbReference>
<dbReference type="PRINTS" id="PR00115">
    <property type="entry name" value="F16BPHPHTASE"/>
</dbReference>
<dbReference type="SUPFAM" id="SSF56655">
    <property type="entry name" value="Carbohydrate phosphatase"/>
    <property type="match status" value="1"/>
</dbReference>
<evidence type="ECO:0000255" key="1">
    <source>
        <dbReference type="HAMAP-Rule" id="MF_01855"/>
    </source>
</evidence>
<organism>
    <name type="scientific">Dichelobacter nodosus (strain VCS1703A)</name>
    <dbReference type="NCBI Taxonomy" id="246195"/>
    <lineage>
        <taxon>Bacteria</taxon>
        <taxon>Pseudomonadati</taxon>
        <taxon>Pseudomonadota</taxon>
        <taxon>Gammaproteobacteria</taxon>
        <taxon>Cardiobacteriales</taxon>
        <taxon>Cardiobacteriaceae</taxon>
        <taxon>Dichelobacter</taxon>
    </lineage>
</organism>
<feature type="chain" id="PRO_0000364540" description="Fructose-1,6-bisphosphatase class 1">
    <location>
        <begin position="1"/>
        <end position="336"/>
    </location>
</feature>
<feature type="binding site" evidence="1">
    <location>
        <position position="91"/>
    </location>
    <ligand>
        <name>Mg(2+)</name>
        <dbReference type="ChEBI" id="CHEBI:18420"/>
        <label>1</label>
    </ligand>
</feature>
<feature type="binding site" evidence="1">
    <location>
        <position position="114"/>
    </location>
    <ligand>
        <name>Mg(2+)</name>
        <dbReference type="ChEBI" id="CHEBI:18420"/>
        <label>1</label>
    </ligand>
</feature>
<feature type="binding site" evidence="1">
    <location>
        <position position="114"/>
    </location>
    <ligand>
        <name>Mg(2+)</name>
        <dbReference type="ChEBI" id="CHEBI:18420"/>
        <label>2</label>
    </ligand>
</feature>
<feature type="binding site" evidence="1">
    <location>
        <position position="116"/>
    </location>
    <ligand>
        <name>Mg(2+)</name>
        <dbReference type="ChEBI" id="CHEBI:18420"/>
        <label>1</label>
    </ligand>
</feature>
<feature type="binding site" evidence="1">
    <location>
        <begin position="117"/>
        <end position="120"/>
    </location>
    <ligand>
        <name>substrate</name>
    </ligand>
</feature>
<feature type="binding site" evidence="1">
    <location>
        <position position="117"/>
    </location>
    <ligand>
        <name>Mg(2+)</name>
        <dbReference type="ChEBI" id="CHEBI:18420"/>
        <label>2</label>
    </ligand>
</feature>
<feature type="binding site" evidence="1">
    <location>
        <position position="210"/>
    </location>
    <ligand>
        <name>substrate</name>
    </ligand>
</feature>
<feature type="binding site" evidence="1">
    <location>
        <position position="243"/>
    </location>
    <ligand>
        <name>substrate</name>
    </ligand>
</feature>
<feature type="binding site" evidence="1">
    <location>
        <position position="273"/>
    </location>
    <ligand>
        <name>substrate</name>
    </ligand>
</feature>
<feature type="binding site" evidence="1">
    <location>
        <position position="279"/>
    </location>
    <ligand>
        <name>Mg(2+)</name>
        <dbReference type="ChEBI" id="CHEBI:18420"/>
        <label>2</label>
    </ligand>
</feature>
<keyword id="KW-0119">Carbohydrate metabolism</keyword>
<keyword id="KW-0963">Cytoplasm</keyword>
<keyword id="KW-0378">Hydrolase</keyword>
<keyword id="KW-0460">Magnesium</keyword>
<keyword id="KW-0479">Metal-binding</keyword>
<keyword id="KW-1185">Reference proteome</keyword>